<accession>Q9XGX7</accession>
<accession>Q0IMG2</accession>
<accession>Q2QNC2</accession>
<feature type="chain" id="PRO_0000193607" description="Mitochondrial import inner membrane translocase subunit Tim9">
    <location>
        <begin position="1"/>
        <end position="93"/>
    </location>
</feature>
<feature type="short sequence motif" description="Twin CX3C motif">
    <location>
        <begin position="43"/>
        <end position="67"/>
    </location>
</feature>
<feature type="disulfide bond" evidence="1">
    <location>
        <begin position="43"/>
        <end position="67"/>
    </location>
</feature>
<feature type="disulfide bond" evidence="1">
    <location>
        <begin position="47"/>
        <end position="63"/>
    </location>
</feature>
<feature type="sequence conflict" description="In Ref. 1; AAD40019." evidence="2" ref="1">
    <original>P</original>
    <variation>T</variation>
    <location>
        <position position="92"/>
    </location>
</feature>
<dbReference type="EMBL" id="AF150113">
    <property type="protein sequence ID" value="AAD40019.1"/>
    <property type="molecule type" value="mRNA"/>
</dbReference>
<dbReference type="EMBL" id="DP000011">
    <property type="protein sequence ID" value="ABA99662.1"/>
    <property type="molecule type" value="Genomic_DNA"/>
</dbReference>
<dbReference type="EMBL" id="AP008218">
    <property type="protein sequence ID" value="BAF30103.1"/>
    <property type="molecule type" value="Genomic_DNA"/>
</dbReference>
<dbReference type="EMBL" id="AP014968">
    <property type="protein sequence ID" value="BAT17740.1"/>
    <property type="molecule type" value="Genomic_DNA"/>
</dbReference>
<dbReference type="EMBL" id="CM000149">
    <property type="protein sequence ID" value="EEE53462.1"/>
    <property type="molecule type" value="Genomic_DNA"/>
</dbReference>
<dbReference type="EMBL" id="AK120784">
    <property type="protein sequence ID" value="BAH00171.1"/>
    <property type="molecule type" value="mRNA"/>
</dbReference>
<dbReference type="PIR" id="T51188">
    <property type="entry name" value="T51188"/>
</dbReference>
<dbReference type="RefSeq" id="XP_015620238.1">
    <property type="nucleotide sequence ID" value="XM_015764752.1"/>
</dbReference>
<dbReference type="SMR" id="Q9XGX7"/>
<dbReference type="FunCoup" id="Q9XGX7">
    <property type="interactions" value="2411"/>
</dbReference>
<dbReference type="STRING" id="39947.Q9XGX7"/>
<dbReference type="PaxDb" id="39947-Q9XGX7"/>
<dbReference type="EnsemblPlants" id="Os12t0571200-01">
    <property type="protein sequence ID" value="Os12t0571200-01"/>
    <property type="gene ID" value="Os12g0571200"/>
</dbReference>
<dbReference type="Gramene" id="Os12t0571200-01">
    <property type="protein sequence ID" value="Os12t0571200-01"/>
    <property type="gene ID" value="Os12g0571200"/>
</dbReference>
<dbReference type="KEGG" id="dosa:Os12g0571200"/>
<dbReference type="eggNOG" id="KOG3479">
    <property type="taxonomic scope" value="Eukaryota"/>
</dbReference>
<dbReference type="HOGENOM" id="CLU_141397_3_2_1"/>
<dbReference type="InParanoid" id="Q9XGX7"/>
<dbReference type="OMA" id="QDFLRMY"/>
<dbReference type="OrthoDB" id="1551503at2759"/>
<dbReference type="Proteomes" id="UP000000763">
    <property type="component" value="Chromosome 12"/>
</dbReference>
<dbReference type="Proteomes" id="UP000007752">
    <property type="component" value="Chromosome 12"/>
</dbReference>
<dbReference type="Proteomes" id="UP000059680">
    <property type="component" value="Chromosome 12"/>
</dbReference>
<dbReference type="GO" id="GO:0005743">
    <property type="term" value="C:mitochondrial inner membrane"/>
    <property type="evidence" value="ECO:0007669"/>
    <property type="project" value="UniProtKB-SubCell"/>
</dbReference>
<dbReference type="GO" id="GO:0046872">
    <property type="term" value="F:metal ion binding"/>
    <property type="evidence" value="ECO:0007669"/>
    <property type="project" value="UniProtKB-KW"/>
</dbReference>
<dbReference type="GO" id="GO:0007005">
    <property type="term" value="P:mitochondrion organization"/>
    <property type="evidence" value="ECO:0007669"/>
    <property type="project" value="EnsemblPlants"/>
</dbReference>
<dbReference type="GO" id="GO:0015031">
    <property type="term" value="P:protein transport"/>
    <property type="evidence" value="ECO:0007669"/>
    <property type="project" value="UniProtKB-KW"/>
</dbReference>
<dbReference type="FunFam" id="1.10.287.810:FF:000008">
    <property type="entry name" value="Mitochondrial import inner membrane translocase subunit TIM9"/>
    <property type="match status" value="1"/>
</dbReference>
<dbReference type="Gene3D" id="1.10.287.810">
    <property type="entry name" value="Mitochondrial import inner membrane translocase subunit tim13 like domains"/>
    <property type="match status" value="1"/>
</dbReference>
<dbReference type="InterPro" id="IPR050673">
    <property type="entry name" value="Mito_inner_translocase_sub"/>
</dbReference>
<dbReference type="InterPro" id="IPR004217">
    <property type="entry name" value="Tim10-like"/>
</dbReference>
<dbReference type="InterPro" id="IPR035427">
    <property type="entry name" value="Tim10-like_dom_sf"/>
</dbReference>
<dbReference type="PANTHER" id="PTHR13172">
    <property type="entry name" value="MITOCHONDRIAL IMPORT INNER MEMBRANE TRANSLOCASE SUBUNIT TIM9B"/>
    <property type="match status" value="1"/>
</dbReference>
<dbReference type="Pfam" id="PF02953">
    <property type="entry name" value="zf-Tim10_DDP"/>
    <property type="match status" value="1"/>
</dbReference>
<dbReference type="SUPFAM" id="SSF144122">
    <property type="entry name" value="Tim10-like"/>
    <property type="match status" value="1"/>
</dbReference>
<organism>
    <name type="scientific">Oryza sativa subsp. japonica</name>
    <name type="common">Rice</name>
    <dbReference type="NCBI Taxonomy" id="39947"/>
    <lineage>
        <taxon>Eukaryota</taxon>
        <taxon>Viridiplantae</taxon>
        <taxon>Streptophyta</taxon>
        <taxon>Embryophyta</taxon>
        <taxon>Tracheophyta</taxon>
        <taxon>Spermatophyta</taxon>
        <taxon>Magnoliopsida</taxon>
        <taxon>Liliopsida</taxon>
        <taxon>Poales</taxon>
        <taxon>Poaceae</taxon>
        <taxon>BOP clade</taxon>
        <taxon>Oryzoideae</taxon>
        <taxon>Oryzeae</taxon>
        <taxon>Oryzinae</taxon>
        <taxon>Oryza</taxon>
        <taxon>Oryza sativa</taxon>
    </lineage>
</organism>
<evidence type="ECO:0000250" key="1"/>
<evidence type="ECO:0000305" key="2"/>
<evidence type="ECO:0000312" key="3">
    <source>
        <dbReference type="EMBL" id="EEE53462.1"/>
    </source>
</evidence>
<proteinExistence type="inferred from homology"/>
<reference key="1">
    <citation type="journal article" date="1999" name="FEBS Lett.">
        <title>The mitochondrial TIM22 preprotein translocase is highly conserved throughout the eukaryotic kingdom.</title>
        <authorList>
            <person name="Bauer M.F."/>
            <person name="Rothbauer U."/>
            <person name="Muehlenbein N."/>
            <person name="Smith R.J.H."/>
            <person name="Gerbitz K.-D."/>
            <person name="Neupert W."/>
            <person name="Brunner M."/>
            <person name="Hofmann S."/>
        </authorList>
    </citation>
    <scope>NUCLEOTIDE SEQUENCE [MRNA]</scope>
</reference>
<reference key="2">
    <citation type="journal article" date="2005" name="BMC Biol.">
        <title>The sequence of rice chromosomes 11 and 12, rich in disease resistance genes and recent gene duplications.</title>
        <authorList>
            <consortium name="The rice chromosomes 11 and 12 sequencing consortia"/>
        </authorList>
    </citation>
    <scope>NUCLEOTIDE SEQUENCE [LARGE SCALE GENOMIC DNA]</scope>
    <source>
        <strain>cv. Nipponbare</strain>
    </source>
</reference>
<reference key="3">
    <citation type="journal article" date="2005" name="Nature">
        <title>The map-based sequence of the rice genome.</title>
        <authorList>
            <consortium name="International rice genome sequencing project (IRGSP)"/>
        </authorList>
    </citation>
    <scope>NUCLEOTIDE SEQUENCE [LARGE SCALE GENOMIC DNA]</scope>
    <source>
        <strain>cv. Nipponbare</strain>
    </source>
</reference>
<reference key="4">
    <citation type="journal article" date="2008" name="Nucleic Acids Res.">
        <title>The rice annotation project database (RAP-DB): 2008 update.</title>
        <authorList>
            <consortium name="The rice annotation project (RAP)"/>
        </authorList>
    </citation>
    <scope>GENOME REANNOTATION</scope>
    <source>
        <strain>cv. Nipponbare</strain>
    </source>
</reference>
<reference key="5">
    <citation type="journal article" date="2013" name="Rice">
        <title>Improvement of the Oryza sativa Nipponbare reference genome using next generation sequence and optical map data.</title>
        <authorList>
            <person name="Kawahara Y."/>
            <person name="de la Bastide M."/>
            <person name="Hamilton J.P."/>
            <person name="Kanamori H."/>
            <person name="McCombie W.R."/>
            <person name="Ouyang S."/>
            <person name="Schwartz D.C."/>
            <person name="Tanaka T."/>
            <person name="Wu J."/>
            <person name="Zhou S."/>
            <person name="Childs K.L."/>
            <person name="Davidson R.M."/>
            <person name="Lin H."/>
            <person name="Quesada-Ocampo L."/>
            <person name="Vaillancourt B."/>
            <person name="Sakai H."/>
            <person name="Lee S.S."/>
            <person name="Kim J."/>
            <person name="Numa H."/>
            <person name="Itoh T."/>
            <person name="Buell C.R."/>
            <person name="Matsumoto T."/>
        </authorList>
    </citation>
    <scope>GENOME REANNOTATION</scope>
    <source>
        <strain>cv. Nipponbare</strain>
    </source>
</reference>
<reference key="6">
    <citation type="journal article" date="2005" name="PLoS Biol.">
        <title>The genomes of Oryza sativa: a history of duplications.</title>
        <authorList>
            <person name="Yu J."/>
            <person name="Wang J."/>
            <person name="Lin W."/>
            <person name="Li S."/>
            <person name="Li H."/>
            <person name="Zhou J."/>
            <person name="Ni P."/>
            <person name="Dong W."/>
            <person name="Hu S."/>
            <person name="Zeng C."/>
            <person name="Zhang J."/>
            <person name="Zhang Y."/>
            <person name="Li R."/>
            <person name="Xu Z."/>
            <person name="Li S."/>
            <person name="Li X."/>
            <person name="Zheng H."/>
            <person name="Cong L."/>
            <person name="Lin L."/>
            <person name="Yin J."/>
            <person name="Geng J."/>
            <person name="Li G."/>
            <person name="Shi J."/>
            <person name="Liu J."/>
            <person name="Lv H."/>
            <person name="Li J."/>
            <person name="Wang J."/>
            <person name="Deng Y."/>
            <person name="Ran L."/>
            <person name="Shi X."/>
            <person name="Wang X."/>
            <person name="Wu Q."/>
            <person name="Li C."/>
            <person name="Ren X."/>
            <person name="Wang J."/>
            <person name="Wang X."/>
            <person name="Li D."/>
            <person name="Liu D."/>
            <person name="Zhang X."/>
            <person name="Ji Z."/>
            <person name="Zhao W."/>
            <person name="Sun Y."/>
            <person name="Zhang Z."/>
            <person name="Bao J."/>
            <person name="Han Y."/>
            <person name="Dong L."/>
            <person name="Ji J."/>
            <person name="Chen P."/>
            <person name="Wu S."/>
            <person name="Liu J."/>
            <person name="Xiao Y."/>
            <person name="Bu D."/>
            <person name="Tan J."/>
            <person name="Yang L."/>
            <person name="Ye C."/>
            <person name="Zhang J."/>
            <person name="Xu J."/>
            <person name="Zhou Y."/>
            <person name="Yu Y."/>
            <person name="Zhang B."/>
            <person name="Zhuang S."/>
            <person name="Wei H."/>
            <person name="Liu B."/>
            <person name="Lei M."/>
            <person name="Yu H."/>
            <person name="Li Y."/>
            <person name="Xu H."/>
            <person name="Wei S."/>
            <person name="He X."/>
            <person name="Fang L."/>
            <person name="Zhang Z."/>
            <person name="Zhang Y."/>
            <person name="Huang X."/>
            <person name="Su Z."/>
            <person name="Tong W."/>
            <person name="Li J."/>
            <person name="Tong Z."/>
            <person name="Li S."/>
            <person name="Ye J."/>
            <person name="Wang L."/>
            <person name="Fang L."/>
            <person name="Lei T."/>
            <person name="Chen C.-S."/>
            <person name="Chen H.-C."/>
            <person name="Xu Z."/>
            <person name="Li H."/>
            <person name="Huang H."/>
            <person name="Zhang F."/>
            <person name="Xu H."/>
            <person name="Li N."/>
            <person name="Zhao C."/>
            <person name="Li S."/>
            <person name="Dong L."/>
            <person name="Huang Y."/>
            <person name="Li L."/>
            <person name="Xi Y."/>
            <person name="Qi Q."/>
            <person name="Li W."/>
            <person name="Zhang B."/>
            <person name="Hu W."/>
            <person name="Zhang Y."/>
            <person name="Tian X."/>
            <person name="Jiao Y."/>
            <person name="Liang X."/>
            <person name="Jin J."/>
            <person name="Gao L."/>
            <person name="Zheng W."/>
            <person name="Hao B."/>
            <person name="Liu S.-M."/>
            <person name="Wang W."/>
            <person name="Yuan L."/>
            <person name="Cao M."/>
            <person name="McDermott J."/>
            <person name="Samudrala R."/>
            <person name="Wang J."/>
            <person name="Wong G.K.-S."/>
            <person name="Yang H."/>
        </authorList>
    </citation>
    <scope>NUCLEOTIDE SEQUENCE [LARGE SCALE GENOMIC DNA]</scope>
    <source>
        <strain>cv. Nipponbare</strain>
    </source>
</reference>
<reference key="7">
    <citation type="journal article" date="2003" name="Science">
        <title>Collection, mapping, and annotation of over 28,000 cDNA clones from japonica rice.</title>
        <authorList>
            <consortium name="The rice full-length cDNA consortium"/>
        </authorList>
    </citation>
    <scope>NUCLEOTIDE SEQUENCE [LARGE SCALE MRNA]</scope>
    <source>
        <strain>cv. Nipponbare</strain>
    </source>
</reference>
<gene>
    <name type="primary">TIM9</name>
    <name type="ordered locus">Os12g0571200</name>
    <name type="ordered locus">LOC_Os12g38310</name>
    <name evidence="3" type="ORF">OsJ_36586</name>
</gene>
<protein>
    <recommendedName>
        <fullName>Mitochondrial import inner membrane translocase subunit Tim9</fullName>
    </recommendedName>
</protein>
<comment type="function">
    <text evidence="1">Mitochondrial intermembrane chaperone that participates in the import and insertion of multi-pass transmembrane proteins into the mitochondrial inner membrane. May also be required for the transfer of beta-barrel precursors from the TOM complex to the sorting and assembly machinery (SAM complex) of the outer membrane. Acts as a chaperone-like protein that protects the hydrophobic precursors from aggregation and guide them through the mitochondrial intermembrane space (By similarity).</text>
</comment>
<comment type="subunit">
    <text evidence="1">Heterohexamer; composed of 3 copies of TIM9 and 3 copies of TIM10, named soluble 70 kDa complex. The complex associates with the TIM22 component of the TIM22 complex. Interacts with multi-pass transmembrane proteins in transit (By similarity).</text>
</comment>
<comment type="subcellular location">
    <subcellularLocation>
        <location evidence="1">Mitochondrion inner membrane</location>
        <topology evidence="1">Peripheral membrane protein</topology>
        <orientation evidence="1">Intermembrane side</orientation>
    </subcellularLocation>
</comment>
<comment type="domain">
    <text evidence="1">The twin CX3C motif contains 4 conserved Cys residues that form 2 disulfide bonds in the mitochondrial intermembrane space. However, during the transit of TIM9 from cytoplasm into mitochondrion, the Cys residues probably coordinate zinc, thereby preventing folding and allowing its transfer across mitochondrial outer membrane (By similarity).</text>
</comment>
<comment type="similarity">
    <text evidence="2">Belongs to the small Tim family.</text>
</comment>
<name>TIM9_ORYSJ</name>
<keyword id="KW-0143">Chaperone</keyword>
<keyword id="KW-1015">Disulfide bond</keyword>
<keyword id="KW-0472">Membrane</keyword>
<keyword id="KW-0479">Metal-binding</keyword>
<keyword id="KW-0496">Mitochondrion</keyword>
<keyword id="KW-0999">Mitochondrion inner membrane</keyword>
<keyword id="KW-0653">Protein transport</keyword>
<keyword id="KW-1185">Reference proteome</keyword>
<keyword id="KW-0811">Translocation</keyword>
<keyword id="KW-0813">Transport</keyword>
<keyword id="KW-0862">Zinc</keyword>
<sequence>MDKSMLGDLDGLPEEDKMRMAAMVDQLQIRDSLRMYNSLVERCFTDCVDTFRRKTLDKQEESCVRRCAEKFLKHSMRVGMRFAELNQGVATPD</sequence>